<protein>
    <recommendedName>
        <fullName>HTH-type transcriptional regulator PcaQ</fullName>
    </recommendedName>
    <alternativeName>
        <fullName>Pca operon transcriptional activator</fullName>
    </alternativeName>
</protein>
<reference key="1">
    <citation type="journal article" date="2001" name="Science">
        <title>The genome of the natural genetic engineer Agrobacterium tumefaciens C58.</title>
        <authorList>
            <person name="Wood D.W."/>
            <person name="Setubal J.C."/>
            <person name="Kaul R."/>
            <person name="Monks D.E."/>
            <person name="Kitajima J.P."/>
            <person name="Okura V.K."/>
            <person name="Zhou Y."/>
            <person name="Chen L."/>
            <person name="Wood G.E."/>
            <person name="Almeida N.F. Jr."/>
            <person name="Woo L."/>
            <person name="Chen Y."/>
            <person name="Paulsen I.T."/>
            <person name="Eisen J.A."/>
            <person name="Karp P.D."/>
            <person name="Bovee D. Sr."/>
            <person name="Chapman P."/>
            <person name="Clendenning J."/>
            <person name="Deatherage G."/>
            <person name="Gillet W."/>
            <person name="Grant C."/>
            <person name="Kutyavin T."/>
            <person name="Levy R."/>
            <person name="Li M.-J."/>
            <person name="McClelland E."/>
            <person name="Palmieri A."/>
            <person name="Raymond C."/>
            <person name="Rouse G."/>
            <person name="Saenphimmachak C."/>
            <person name="Wu Z."/>
            <person name="Romero P."/>
            <person name="Gordon D."/>
            <person name="Zhang S."/>
            <person name="Yoo H."/>
            <person name="Tao Y."/>
            <person name="Biddle P."/>
            <person name="Jung M."/>
            <person name="Krespan W."/>
            <person name="Perry M."/>
            <person name="Gordon-Kamm B."/>
            <person name="Liao L."/>
            <person name="Kim S."/>
            <person name="Hendrick C."/>
            <person name="Zhao Z.-Y."/>
            <person name="Dolan M."/>
            <person name="Chumley F."/>
            <person name="Tingey S.V."/>
            <person name="Tomb J.-F."/>
            <person name="Gordon M.P."/>
            <person name="Olson M.V."/>
            <person name="Nester E.W."/>
        </authorList>
    </citation>
    <scope>NUCLEOTIDE SEQUENCE [LARGE SCALE GENOMIC DNA]</scope>
    <source>
        <strain>C58 / ATCC 33970</strain>
    </source>
</reference>
<reference key="2">
    <citation type="journal article" date="2001" name="Science">
        <title>Genome sequence of the plant pathogen and biotechnology agent Agrobacterium tumefaciens C58.</title>
        <authorList>
            <person name="Goodner B."/>
            <person name="Hinkle G."/>
            <person name="Gattung S."/>
            <person name="Miller N."/>
            <person name="Blanchard M."/>
            <person name="Qurollo B."/>
            <person name="Goldman B.S."/>
            <person name="Cao Y."/>
            <person name="Askenazi M."/>
            <person name="Halling C."/>
            <person name="Mullin L."/>
            <person name="Houmiel K."/>
            <person name="Gordon J."/>
            <person name="Vaudin M."/>
            <person name="Iartchouk O."/>
            <person name="Epp A."/>
            <person name="Liu F."/>
            <person name="Wollam C."/>
            <person name="Allinger M."/>
            <person name="Doughty D."/>
            <person name="Scott C."/>
            <person name="Lappas C."/>
            <person name="Markelz B."/>
            <person name="Flanagan C."/>
            <person name="Crowell C."/>
            <person name="Gurson J."/>
            <person name="Lomo C."/>
            <person name="Sear C."/>
            <person name="Strub G."/>
            <person name="Cielo C."/>
            <person name="Slater S."/>
        </authorList>
    </citation>
    <scope>NUCLEOTIDE SEQUENCE [LARGE SCALE GENOMIC DNA]</scope>
    <source>
        <strain>C58 / ATCC 33970</strain>
    </source>
</reference>
<organism>
    <name type="scientific">Agrobacterium fabrum (strain C58 / ATCC 33970)</name>
    <name type="common">Agrobacterium tumefaciens (strain C58)</name>
    <dbReference type="NCBI Taxonomy" id="176299"/>
    <lineage>
        <taxon>Bacteria</taxon>
        <taxon>Pseudomonadati</taxon>
        <taxon>Pseudomonadota</taxon>
        <taxon>Alphaproteobacteria</taxon>
        <taxon>Hyphomicrobiales</taxon>
        <taxon>Rhizobiaceae</taxon>
        <taxon>Rhizobium/Agrobacterium group</taxon>
        <taxon>Agrobacterium</taxon>
        <taxon>Agrobacterium tumefaciens complex</taxon>
    </lineage>
</organism>
<evidence type="ECO:0000255" key="1">
    <source>
        <dbReference type="PROSITE-ProRule" id="PRU00253"/>
    </source>
</evidence>
<evidence type="ECO:0000305" key="2"/>
<feature type="chain" id="PRO_0000105739" description="HTH-type transcriptional regulator PcaQ">
    <location>
        <begin position="1"/>
        <end position="311"/>
    </location>
</feature>
<feature type="domain" description="HTH lysR-type" evidence="1">
    <location>
        <begin position="6"/>
        <end position="63"/>
    </location>
</feature>
<feature type="DNA-binding region" description="H-T-H motif" evidence="1">
    <location>
        <begin position="23"/>
        <end position="42"/>
    </location>
</feature>
<accession>P0A4T6</accession>
<accession>P52668</accession>
<comment type="function">
    <text>Activates transcription of the pcaDCHGB operon for the catabolism of the phenolic compound protocatechuate.</text>
</comment>
<comment type="similarity">
    <text evidence="2">Belongs to the LysR transcriptional regulatory family.</text>
</comment>
<dbReference type="EMBL" id="AE007870">
    <property type="protein sequence ID" value="AAK88900.2"/>
    <property type="molecule type" value="Genomic_DNA"/>
</dbReference>
<dbReference type="PIR" id="AC3115">
    <property type="entry name" value="AC3115"/>
</dbReference>
<dbReference type="PIR" id="B98172">
    <property type="entry name" value="B98172"/>
</dbReference>
<dbReference type="RefSeq" id="NP_356115.2">
    <property type="nucleotide sequence ID" value="NC_003063.2"/>
</dbReference>
<dbReference type="RefSeq" id="WP_010973945.1">
    <property type="nucleotide sequence ID" value="NC_003063.2"/>
</dbReference>
<dbReference type="SMR" id="P0A4T6"/>
<dbReference type="STRING" id="176299.Atu4543"/>
<dbReference type="EnsemblBacteria" id="AAK88900">
    <property type="protein sequence ID" value="AAK88900"/>
    <property type="gene ID" value="Atu4543"/>
</dbReference>
<dbReference type="GeneID" id="1136417"/>
<dbReference type="KEGG" id="atu:Atu4543"/>
<dbReference type="PATRIC" id="fig|176299.10.peg.4349"/>
<dbReference type="eggNOG" id="COG0583">
    <property type="taxonomic scope" value="Bacteria"/>
</dbReference>
<dbReference type="HOGENOM" id="CLU_039613_6_0_5"/>
<dbReference type="OrthoDB" id="9814165at2"/>
<dbReference type="PhylomeDB" id="P0A4T6"/>
<dbReference type="BioCyc" id="AGRO:ATU4543-MONOMER"/>
<dbReference type="Proteomes" id="UP000000813">
    <property type="component" value="Chromosome linear"/>
</dbReference>
<dbReference type="GO" id="GO:0005829">
    <property type="term" value="C:cytosol"/>
    <property type="evidence" value="ECO:0007669"/>
    <property type="project" value="TreeGrafter"/>
</dbReference>
<dbReference type="GO" id="GO:0003677">
    <property type="term" value="F:DNA binding"/>
    <property type="evidence" value="ECO:0007669"/>
    <property type="project" value="UniProtKB-KW"/>
</dbReference>
<dbReference type="GO" id="GO:0003700">
    <property type="term" value="F:DNA-binding transcription factor activity"/>
    <property type="evidence" value="ECO:0007669"/>
    <property type="project" value="InterPro"/>
</dbReference>
<dbReference type="GO" id="GO:0019619">
    <property type="term" value="P:3,4-dihydroxybenzoate catabolic process"/>
    <property type="evidence" value="ECO:0007669"/>
    <property type="project" value="InterPro"/>
</dbReference>
<dbReference type="GO" id="GO:0045893">
    <property type="term" value="P:positive regulation of DNA-templated transcription"/>
    <property type="evidence" value="ECO:0007669"/>
    <property type="project" value="InterPro"/>
</dbReference>
<dbReference type="FunFam" id="1.10.10.10:FF:000208">
    <property type="entry name" value="LysR family transcriptional regulator"/>
    <property type="match status" value="1"/>
</dbReference>
<dbReference type="Gene3D" id="3.40.190.10">
    <property type="entry name" value="Periplasmic binding protein-like II"/>
    <property type="match status" value="2"/>
</dbReference>
<dbReference type="Gene3D" id="1.10.10.10">
    <property type="entry name" value="Winged helix-like DNA-binding domain superfamily/Winged helix DNA-binding domain"/>
    <property type="match status" value="1"/>
</dbReference>
<dbReference type="InterPro" id="IPR050950">
    <property type="entry name" value="HTH-type_LysR_regulators"/>
</dbReference>
<dbReference type="InterPro" id="IPR005119">
    <property type="entry name" value="LysR_subst-bd"/>
</dbReference>
<dbReference type="InterPro" id="IPR012787">
    <property type="entry name" value="TF_PcaQ"/>
</dbReference>
<dbReference type="InterPro" id="IPR000847">
    <property type="entry name" value="Tscrpt_reg_HTH_LysR"/>
</dbReference>
<dbReference type="InterPro" id="IPR036388">
    <property type="entry name" value="WH-like_DNA-bd_sf"/>
</dbReference>
<dbReference type="InterPro" id="IPR036390">
    <property type="entry name" value="WH_DNA-bd_sf"/>
</dbReference>
<dbReference type="NCBIfam" id="TIGR02424">
    <property type="entry name" value="TF_pcaQ"/>
    <property type="match status" value="1"/>
</dbReference>
<dbReference type="PANTHER" id="PTHR30419">
    <property type="entry name" value="HTH-TYPE TRANSCRIPTIONAL REGULATOR YBHD"/>
    <property type="match status" value="1"/>
</dbReference>
<dbReference type="PANTHER" id="PTHR30419:SF8">
    <property type="entry name" value="NITROGEN ASSIMILATION TRANSCRIPTIONAL ACTIVATOR-RELATED"/>
    <property type="match status" value="1"/>
</dbReference>
<dbReference type="Pfam" id="PF00126">
    <property type="entry name" value="HTH_1"/>
    <property type="match status" value="1"/>
</dbReference>
<dbReference type="Pfam" id="PF03466">
    <property type="entry name" value="LysR_substrate"/>
    <property type="match status" value="1"/>
</dbReference>
<dbReference type="PRINTS" id="PR00039">
    <property type="entry name" value="HTHLYSR"/>
</dbReference>
<dbReference type="SUPFAM" id="SSF53850">
    <property type="entry name" value="Periplasmic binding protein-like II"/>
    <property type="match status" value="1"/>
</dbReference>
<dbReference type="SUPFAM" id="SSF46785">
    <property type="entry name" value="Winged helix' DNA-binding domain"/>
    <property type="match status" value="1"/>
</dbReference>
<dbReference type="PROSITE" id="PS50931">
    <property type="entry name" value="HTH_LYSR"/>
    <property type="match status" value="1"/>
</dbReference>
<gene>
    <name type="primary">pcaQ</name>
    <name type="ordered locus">Atu4543</name>
    <name type="ORF">AGR_L_649</name>
</gene>
<keyword id="KW-0010">Activator</keyword>
<keyword id="KW-0238">DNA-binding</keyword>
<keyword id="KW-1185">Reference proteome</keyword>
<keyword id="KW-0804">Transcription</keyword>
<keyword id="KW-0805">Transcription regulation</keyword>
<name>PCAQ_AGRFC</name>
<sequence length="311" mass="33546">MVDQRIKFRHLQTFVEVARQKSVIRAAEILHVSQPAVTKTIRELEDVLGVSLLEREGRGIRISRYGEVFLRHAGATMTALRQAVDSVSQEAARAGPPVRVGALPTVSVRIMPKAMSGFLAEKTGSPVKIVTGENAVLLEQLRVGDLDLVVGRLAAPQKMAGFSFEHLYSEKVRFVVRAGHPLLSPGLSVFDHLHEYPVLMPTRQSVIGPVVEQFLIANGVPALPIRIETVSDAFGRAFLRTSDAIWIISEGVVAADVADGILAILPVETGDTSGPVGLTVRADTQPSLPLSLLMQAIREAAGELFDGRTEG</sequence>
<proteinExistence type="inferred from homology"/>